<protein>
    <recommendedName>
        <fullName evidence="1">NAD kinase</fullName>
        <ecNumber evidence="1">2.7.1.23</ecNumber>
    </recommendedName>
    <alternativeName>
        <fullName evidence="1">ATP-dependent NAD kinase</fullName>
    </alternativeName>
</protein>
<reference key="1">
    <citation type="journal article" date="2002" name="Proc. Natl. Acad. Sci. U.S.A.">
        <title>The genome sequence of Bifidobacterium longum reflects its adaptation to the human gastrointestinal tract.</title>
        <authorList>
            <person name="Schell M.A."/>
            <person name="Karmirantzou M."/>
            <person name="Snel B."/>
            <person name="Vilanova D."/>
            <person name="Berger B."/>
            <person name="Pessi G."/>
            <person name="Zwahlen M.-C."/>
            <person name="Desiere F."/>
            <person name="Bork P."/>
            <person name="Delley M."/>
            <person name="Pridmore R.D."/>
            <person name="Arigoni F."/>
        </authorList>
    </citation>
    <scope>NUCLEOTIDE SEQUENCE [LARGE SCALE GENOMIC DNA]</scope>
    <source>
        <strain>NCC 2705</strain>
    </source>
</reference>
<sequence>MAKRNAVVVTHTRLRQTGTVVAEAVSQLRVAGFEVAIIDNTEAPDFGVQPPCVSDDTEIVVVLGGDGTILRAAELVHCTQVPILGVNMGHVGFLAEFESFQIDEAIRRVSTHDYSIDERMIAHVDVWLPGATKPIEDWALNDITLERADRGKMVELSIRVDDVEMNSFGADGVIVSTPTGSTAYAFSAGGPVMWPNVKALQLIPLAAHALFARPLIIGSGSTFTIDILDDSMSEGWICCDGRRQRALPQGTRVMVRESRDTLRLARLSGVPFTNRLVSKFDLPVVGWREHARNEASSQSLHHGHTFPAAAYAAGVAVAVAGDAGVAGTDPDKPGERDGKAGA</sequence>
<keyword id="KW-0067">ATP-binding</keyword>
<keyword id="KW-0963">Cytoplasm</keyword>
<keyword id="KW-0418">Kinase</keyword>
<keyword id="KW-0520">NAD</keyword>
<keyword id="KW-0521">NADP</keyword>
<keyword id="KW-0547">Nucleotide-binding</keyword>
<keyword id="KW-1185">Reference proteome</keyword>
<keyword id="KW-0808">Transferase</keyword>
<gene>
    <name evidence="1" type="primary">nadK</name>
    <name type="ordered locus">BL1044</name>
</gene>
<evidence type="ECO:0000255" key="1">
    <source>
        <dbReference type="HAMAP-Rule" id="MF_00361"/>
    </source>
</evidence>
<accession>Q8G5G8</accession>
<comment type="function">
    <text evidence="1">Involved in the regulation of the intracellular balance of NAD and NADP, and is a key enzyme in the biosynthesis of NADP. Catalyzes specifically the phosphorylation on 2'-hydroxyl of the adenosine moiety of NAD to yield NADP.</text>
</comment>
<comment type="catalytic activity">
    <reaction evidence="1">
        <text>NAD(+) + ATP = ADP + NADP(+) + H(+)</text>
        <dbReference type="Rhea" id="RHEA:18629"/>
        <dbReference type="ChEBI" id="CHEBI:15378"/>
        <dbReference type="ChEBI" id="CHEBI:30616"/>
        <dbReference type="ChEBI" id="CHEBI:57540"/>
        <dbReference type="ChEBI" id="CHEBI:58349"/>
        <dbReference type="ChEBI" id="CHEBI:456216"/>
        <dbReference type="EC" id="2.7.1.23"/>
    </reaction>
</comment>
<comment type="cofactor">
    <cofactor evidence="1">
        <name>a divalent metal cation</name>
        <dbReference type="ChEBI" id="CHEBI:60240"/>
    </cofactor>
</comment>
<comment type="subcellular location">
    <subcellularLocation>
        <location evidence="1">Cytoplasm</location>
    </subcellularLocation>
</comment>
<comment type="similarity">
    <text evidence="1">Belongs to the NAD kinase family.</text>
</comment>
<proteinExistence type="inferred from homology"/>
<dbReference type="EC" id="2.7.1.23" evidence="1"/>
<dbReference type="EMBL" id="AE014295">
    <property type="protein sequence ID" value="AAN24850.1"/>
    <property type="molecule type" value="Genomic_DNA"/>
</dbReference>
<dbReference type="RefSeq" id="NP_696214.1">
    <property type="nucleotide sequence ID" value="NC_004307.2"/>
</dbReference>
<dbReference type="RefSeq" id="WP_011068269.1">
    <property type="nucleotide sequence ID" value="NC_004307.2"/>
</dbReference>
<dbReference type="SMR" id="Q8G5G8"/>
<dbReference type="STRING" id="206672.BL1044"/>
<dbReference type="EnsemblBacteria" id="AAN24850">
    <property type="protein sequence ID" value="AAN24850"/>
    <property type="gene ID" value="BL1044"/>
</dbReference>
<dbReference type="KEGG" id="blo:BL1044"/>
<dbReference type="PATRIC" id="fig|206672.9.peg.748"/>
<dbReference type="HOGENOM" id="CLU_008831_0_0_11"/>
<dbReference type="OrthoDB" id="9774737at2"/>
<dbReference type="PhylomeDB" id="Q8G5G8"/>
<dbReference type="Proteomes" id="UP000000439">
    <property type="component" value="Chromosome"/>
</dbReference>
<dbReference type="GO" id="GO:0005737">
    <property type="term" value="C:cytoplasm"/>
    <property type="evidence" value="ECO:0007669"/>
    <property type="project" value="UniProtKB-SubCell"/>
</dbReference>
<dbReference type="GO" id="GO:0005524">
    <property type="term" value="F:ATP binding"/>
    <property type="evidence" value="ECO:0007669"/>
    <property type="project" value="UniProtKB-KW"/>
</dbReference>
<dbReference type="GO" id="GO:0046872">
    <property type="term" value="F:metal ion binding"/>
    <property type="evidence" value="ECO:0007669"/>
    <property type="project" value="UniProtKB-UniRule"/>
</dbReference>
<dbReference type="GO" id="GO:0051287">
    <property type="term" value="F:NAD binding"/>
    <property type="evidence" value="ECO:0007669"/>
    <property type="project" value="UniProtKB-ARBA"/>
</dbReference>
<dbReference type="GO" id="GO:0003951">
    <property type="term" value="F:NAD+ kinase activity"/>
    <property type="evidence" value="ECO:0007669"/>
    <property type="project" value="UniProtKB-UniRule"/>
</dbReference>
<dbReference type="GO" id="GO:0019674">
    <property type="term" value="P:NAD metabolic process"/>
    <property type="evidence" value="ECO:0007669"/>
    <property type="project" value="InterPro"/>
</dbReference>
<dbReference type="GO" id="GO:0006741">
    <property type="term" value="P:NADP biosynthetic process"/>
    <property type="evidence" value="ECO:0007669"/>
    <property type="project" value="UniProtKB-UniRule"/>
</dbReference>
<dbReference type="Gene3D" id="3.40.50.10330">
    <property type="entry name" value="Probable inorganic polyphosphate/atp-NAD kinase, domain 1"/>
    <property type="match status" value="1"/>
</dbReference>
<dbReference type="Gene3D" id="2.60.200.30">
    <property type="entry name" value="Probable inorganic polyphosphate/atp-NAD kinase, domain 2"/>
    <property type="match status" value="1"/>
</dbReference>
<dbReference type="HAMAP" id="MF_00361">
    <property type="entry name" value="NAD_kinase"/>
    <property type="match status" value="1"/>
</dbReference>
<dbReference type="InterPro" id="IPR017438">
    <property type="entry name" value="ATP-NAD_kinase_N"/>
</dbReference>
<dbReference type="InterPro" id="IPR017437">
    <property type="entry name" value="ATP-NAD_kinase_PpnK-typ_C"/>
</dbReference>
<dbReference type="InterPro" id="IPR016064">
    <property type="entry name" value="NAD/diacylglycerol_kinase_sf"/>
</dbReference>
<dbReference type="InterPro" id="IPR002504">
    <property type="entry name" value="NADK"/>
</dbReference>
<dbReference type="NCBIfam" id="NF002892">
    <property type="entry name" value="PRK03372.1"/>
    <property type="match status" value="1"/>
</dbReference>
<dbReference type="PANTHER" id="PTHR20275">
    <property type="entry name" value="NAD KINASE"/>
    <property type="match status" value="1"/>
</dbReference>
<dbReference type="PANTHER" id="PTHR20275:SF0">
    <property type="entry name" value="NAD KINASE"/>
    <property type="match status" value="1"/>
</dbReference>
<dbReference type="Pfam" id="PF01513">
    <property type="entry name" value="NAD_kinase"/>
    <property type="match status" value="1"/>
</dbReference>
<dbReference type="Pfam" id="PF20143">
    <property type="entry name" value="NAD_kinase_C"/>
    <property type="match status" value="1"/>
</dbReference>
<dbReference type="SUPFAM" id="SSF111331">
    <property type="entry name" value="NAD kinase/diacylglycerol kinase-like"/>
    <property type="match status" value="1"/>
</dbReference>
<organism>
    <name type="scientific">Bifidobacterium longum (strain NCC 2705)</name>
    <dbReference type="NCBI Taxonomy" id="206672"/>
    <lineage>
        <taxon>Bacteria</taxon>
        <taxon>Bacillati</taxon>
        <taxon>Actinomycetota</taxon>
        <taxon>Actinomycetes</taxon>
        <taxon>Bifidobacteriales</taxon>
        <taxon>Bifidobacteriaceae</taxon>
        <taxon>Bifidobacterium</taxon>
    </lineage>
</organism>
<feature type="chain" id="PRO_0000120601" description="NAD kinase">
    <location>
        <begin position="1"/>
        <end position="342"/>
    </location>
</feature>
<feature type="active site" description="Proton acceptor" evidence="1">
    <location>
        <position position="66"/>
    </location>
</feature>
<feature type="binding site" evidence="1">
    <location>
        <begin position="66"/>
        <end position="67"/>
    </location>
    <ligand>
        <name>NAD(+)</name>
        <dbReference type="ChEBI" id="CHEBI:57540"/>
    </ligand>
</feature>
<feature type="binding site" evidence="1">
    <location>
        <position position="71"/>
    </location>
    <ligand>
        <name>NAD(+)</name>
        <dbReference type="ChEBI" id="CHEBI:57540"/>
    </ligand>
</feature>
<feature type="binding site" evidence="1">
    <location>
        <begin position="141"/>
        <end position="142"/>
    </location>
    <ligand>
        <name>NAD(+)</name>
        <dbReference type="ChEBI" id="CHEBI:57540"/>
    </ligand>
</feature>
<feature type="binding site" evidence="1">
    <location>
        <position position="152"/>
    </location>
    <ligand>
        <name>NAD(+)</name>
        <dbReference type="ChEBI" id="CHEBI:57540"/>
    </ligand>
</feature>
<feature type="binding site" evidence="1">
    <location>
        <position position="171"/>
    </location>
    <ligand>
        <name>NAD(+)</name>
        <dbReference type="ChEBI" id="CHEBI:57540"/>
    </ligand>
</feature>
<feature type="binding site" evidence="1">
    <location>
        <begin position="182"/>
        <end position="187"/>
    </location>
    <ligand>
        <name>NAD(+)</name>
        <dbReference type="ChEBI" id="CHEBI:57540"/>
    </ligand>
</feature>
<feature type="binding site" evidence="1">
    <location>
        <position position="206"/>
    </location>
    <ligand>
        <name>NAD(+)</name>
        <dbReference type="ChEBI" id="CHEBI:57540"/>
    </ligand>
</feature>
<name>NADK_BIFLO</name>